<gene>
    <name evidence="1" type="primary">ruvA</name>
    <name type="ordered locus">XfasM23_0942</name>
</gene>
<feature type="chain" id="PRO_1000090388" description="Holliday junction branch migration complex subunit RuvA">
    <location>
        <begin position="1"/>
        <end position="194"/>
    </location>
</feature>
<feature type="region of interest" description="Domain I" evidence="1">
    <location>
        <begin position="1"/>
        <end position="64"/>
    </location>
</feature>
<feature type="region of interest" description="Domain II" evidence="1">
    <location>
        <begin position="65"/>
        <end position="140"/>
    </location>
</feature>
<feature type="region of interest" description="Flexible linker" evidence="1">
    <location>
        <begin position="140"/>
        <end position="144"/>
    </location>
</feature>
<feature type="region of interest" description="Domain III" evidence="1">
    <location>
        <begin position="145"/>
        <end position="194"/>
    </location>
</feature>
<protein>
    <recommendedName>
        <fullName evidence="1">Holliday junction branch migration complex subunit RuvA</fullName>
    </recommendedName>
</protein>
<accession>B2I4S9</accession>
<name>RUVA_XYLF2</name>
<evidence type="ECO:0000255" key="1">
    <source>
        <dbReference type="HAMAP-Rule" id="MF_00031"/>
    </source>
</evidence>
<proteinExistence type="inferred from homology"/>
<keyword id="KW-0963">Cytoplasm</keyword>
<keyword id="KW-0227">DNA damage</keyword>
<keyword id="KW-0233">DNA recombination</keyword>
<keyword id="KW-0234">DNA repair</keyword>
<keyword id="KW-0238">DNA-binding</keyword>
<dbReference type="EMBL" id="CP001011">
    <property type="protein sequence ID" value="ACB92374.1"/>
    <property type="molecule type" value="Genomic_DNA"/>
</dbReference>
<dbReference type="RefSeq" id="WP_004572897.1">
    <property type="nucleotide sequence ID" value="NC_010577.1"/>
</dbReference>
<dbReference type="SMR" id="B2I4S9"/>
<dbReference type="GeneID" id="93904678"/>
<dbReference type="KEGG" id="xfn:XfasM23_0942"/>
<dbReference type="HOGENOM" id="CLU_087936_0_0_6"/>
<dbReference type="Proteomes" id="UP000001698">
    <property type="component" value="Chromosome"/>
</dbReference>
<dbReference type="GO" id="GO:0005737">
    <property type="term" value="C:cytoplasm"/>
    <property type="evidence" value="ECO:0007669"/>
    <property type="project" value="UniProtKB-SubCell"/>
</dbReference>
<dbReference type="GO" id="GO:0009379">
    <property type="term" value="C:Holliday junction helicase complex"/>
    <property type="evidence" value="ECO:0007669"/>
    <property type="project" value="InterPro"/>
</dbReference>
<dbReference type="GO" id="GO:0048476">
    <property type="term" value="C:Holliday junction resolvase complex"/>
    <property type="evidence" value="ECO:0007669"/>
    <property type="project" value="UniProtKB-UniRule"/>
</dbReference>
<dbReference type="GO" id="GO:0005524">
    <property type="term" value="F:ATP binding"/>
    <property type="evidence" value="ECO:0007669"/>
    <property type="project" value="InterPro"/>
</dbReference>
<dbReference type="GO" id="GO:0000400">
    <property type="term" value="F:four-way junction DNA binding"/>
    <property type="evidence" value="ECO:0007669"/>
    <property type="project" value="UniProtKB-UniRule"/>
</dbReference>
<dbReference type="GO" id="GO:0009378">
    <property type="term" value="F:four-way junction helicase activity"/>
    <property type="evidence" value="ECO:0007669"/>
    <property type="project" value="InterPro"/>
</dbReference>
<dbReference type="GO" id="GO:0006310">
    <property type="term" value="P:DNA recombination"/>
    <property type="evidence" value="ECO:0007669"/>
    <property type="project" value="UniProtKB-UniRule"/>
</dbReference>
<dbReference type="GO" id="GO:0006281">
    <property type="term" value="P:DNA repair"/>
    <property type="evidence" value="ECO:0007669"/>
    <property type="project" value="UniProtKB-UniRule"/>
</dbReference>
<dbReference type="CDD" id="cd14332">
    <property type="entry name" value="UBA_RuvA_C"/>
    <property type="match status" value="1"/>
</dbReference>
<dbReference type="Gene3D" id="1.10.150.20">
    <property type="entry name" value="5' to 3' exonuclease, C-terminal subdomain"/>
    <property type="match status" value="1"/>
</dbReference>
<dbReference type="Gene3D" id="1.10.8.10">
    <property type="entry name" value="DNA helicase RuvA subunit, C-terminal domain"/>
    <property type="match status" value="1"/>
</dbReference>
<dbReference type="Gene3D" id="2.40.50.140">
    <property type="entry name" value="Nucleic acid-binding proteins"/>
    <property type="match status" value="1"/>
</dbReference>
<dbReference type="HAMAP" id="MF_00031">
    <property type="entry name" value="DNA_HJ_migration_RuvA"/>
    <property type="match status" value="1"/>
</dbReference>
<dbReference type="InterPro" id="IPR013849">
    <property type="entry name" value="DNA_helicase_Holl-junc_RuvA_I"/>
</dbReference>
<dbReference type="InterPro" id="IPR003583">
    <property type="entry name" value="Hlx-hairpin-Hlx_DNA-bd_motif"/>
</dbReference>
<dbReference type="InterPro" id="IPR012340">
    <property type="entry name" value="NA-bd_OB-fold"/>
</dbReference>
<dbReference type="InterPro" id="IPR000085">
    <property type="entry name" value="RuvA"/>
</dbReference>
<dbReference type="InterPro" id="IPR010994">
    <property type="entry name" value="RuvA_2-like"/>
</dbReference>
<dbReference type="InterPro" id="IPR011114">
    <property type="entry name" value="RuvA_C"/>
</dbReference>
<dbReference type="InterPro" id="IPR036267">
    <property type="entry name" value="RuvA_C_sf"/>
</dbReference>
<dbReference type="NCBIfam" id="TIGR00084">
    <property type="entry name" value="ruvA"/>
    <property type="match status" value="1"/>
</dbReference>
<dbReference type="Pfam" id="PF14520">
    <property type="entry name" value="HHH_5"/>
    <property type="match status" value="1"/>
</dbReference>
<dbReference type="Pfam" id="PF07499">
    <property type="entry name" value="RuvA_C"/>
    <property type="match status" value="1"/>
</dbReference>
<dbReference type="Pfam" id="PF01330">
    <property type="entry name" value="RuvA_N"/>
    <property type="match status" value="1"/>
</dbReference>
<dbReference type="SMART" id="SM00278">
    <property type="entry name" value="HhH1"/>
    <property type="match status" value="2"/>
</dbReference>
<dbReference type="SUPFAM" id="SSF46929">
    <property type="entry name" value="DNA helicase RuvA subunit, C-terminal domain"/>
    <property type="match status" value="1"/>
</dbReference>
<dbReference type="SUPFAM" id="SSF50249">
    <property type="entry name" value="Nucleic acid-binding proteins"/>
    <property type="match status" value="1"/>
</dbReference>
<dbReference type="SUPFAM" id="SSF47781">
    <property type="entry name" value="RuvA domain 2-like"/>
    <property type="match status" value="1"/>
</dbReference>
<comment type="function">
    <text evidence="1">The RuvA-RuvB-RuvC complex processes Holliday junction (HJ) DNA during genetic recombination and DNA repair, while the RuvA-RuvB complex plays an important role in the rescue of blocked DNA replication forks via replication fork reversal (RFR). RuvA specifically binds to HJ cruciform DNA, conferring on it an open structure. The RuvB hexamer acts as an ATP-dependent pump, pulling dsDNA into and through the RuvAB complex. HJ branch migration allows RuvC to scan DNA until it finds its consensus sequence, where it cleaves and resolves the cruciform DNA.</text>
</comment>
<comment type="subunit">
    <text evidence="1">Homotetramer. Forms an RuvA(8)-RuvB(12)-Holliday junction (HJ) complex. HJ DNA is sandwiched between 2 RuvA tetramers; dsDNA enters through RuvA and exits via RuvB. An RuvB hexamer assembles on each DNA strand where it exits the tetramer. Each RuvB hexamer is contacted by two RuvA subunits (via domain III) on 2 adjacent RuvB subunits; this complex drives branch migration. In the full resolvosome a probable DNA-RuvA(4)-RuvB(12)-RuvC(2) complex forms which resolves the HJ.</text>
</comment>
<comment type="subcellular location">
    <subcellularLocation>
        <location evidence="1">Cytoplasm</location>
    </subcellularLocation>
</comment>
<comment type="domain">
    <text evidence="1">Has three domains with a flexible linker between the domains II and III and assumes an 'L' shape. Domain III is highly mobile and contacts RuvB.</text>
</comment>
<comment type="similarity">
    <text evidence="1">Belongs to the RuvA family.</text>
</comment>
<sequence length="194" mass="20917">MIGRLRGVLTSKTPPWLVVDVCGVGYELEVPMSTFCELPDVGYEVNLFTHYTQKDDSAALYGFLSESERRLFRHLQRVSGIGTKIALAILSSVSVDTFAGLIQAGDANALTVIPGVGKKTAERMLVELRDRAADFNNGISTSGKLNLDTVSEAALALQQLGYKPAEAARMARDAGTESDDVAIVIKKALQTVLR</sequence>
<organism>
    <name type="scientific">Xylella fastidiosa (strain M23)</name>
    <dbReference type="NCBI Taxonomy" id="405441"/>
    <lineage>
        <taxon>Bacteria</taxon>
        <taxon>Pseudomonadati</taxon>
        <taxon>Pseudomonadota</taxon>
        <taxon>Gammaproteobacteria</taxon>
        <taxon>Lysobacterales</taxon>
        <taxon>Lysobacteraceae</taxon>
        <taxon>Xylella</taxon>
    </lineage>
</organism>
<reference key="1">
    <citation type="journal article" date="2010" name="J. Bacteriol.">
        <title>Whole genome sequences of two Xylella fastidiosa strains (M12 and M23) causing almond leaf scorch disease in California.</title>
        <authorList>
            <person name="Chen J."/>
            <person name="Xie G."/>
            <person name="Han S."/>
            <person name="Chertkov O."/>
            <person name="Sims D."/>
            <person name="Civerolo E.L."/>
        </authorList>
    </citation>
    <scope>NUCLEOTIDE SEQUENCE [LARGE SCALE GENOMIC DNA]</scope>
    <source>
        <strain>M23</strain>
    </source>
</reference>